<organism>
    <name type="scientific">Schizosaccharomyces pombe (strain 972 / ATCC 24843)</name>
    <name type="common">Fission yeast</name>
    <dbReference type="NCBI Taxonomy" id="284812"/>
    <lineage>
        <taxon>Eukaryota</taxon>
        <taxon>Fungi</taxon>
        <taxon>Dikarya</taxon>
        <taxon>Ascomycota</taxon>
        <taxon>Taphrinomycotina</taxon>
        <taxon>Schizosaccharomycetes</taxon>
        <taxon>Schizosaccharomycetales</taxon>
        <taxon>Schizosaccharomycetaceae</taxon>
        <taxon>Schizosaccharomyces</taxon>
    </lineage>
</organism>
<dbReference type="EMBL" id="CU329671">
    <property type="protein sequence ID" value="CAB53719.1"/>
    <property type="molecule type" value="Genomic_DNA"/>
</dbReference>
<dbReference type="PIR" id="T39260">
    <property type="entry name" value="T39260"/>
</dbReference>
<dbReference type="RefSeq" id="NP_595152.1">
    <property type="nucleotide sequence ID" value="NM_001021061.2"/>
</dbReference>
<dbReference type="SMR" id="Q9URV8"/>
<dbReference type="BioGRID" id="276587">
    <property type="interactions" value="2"/>
</dbReference>
<dbReference type="STRING" id="284812.Q9URV8"/>
<dbReference type="iPTMnet" id="Q9URV8"/>
<dbReference type="PaxDb" id="4896-SPBC106.03.1"/>
<dbReference type="EnsemblFungi" id="SPBC106.03.1">
    <property type="protein sequence ID" value="SPBC106.03.1:pep"/>
    <property type="gene ID" value="SPBC106.03"/>
</dbReference>
<dbReference type="KEGG" id="spo:2540049"/>
<dbReference type="PomBase" id="SPBC106.03"/>
<dbReference type="VEuPathDB" id="FungiDB:SPBC106.03"/>
<dbReference type="eggNOG" id="ENOG502QWSS">
    <property type="taxonomic scope" value="Eukaryota"/>
</dbReference>
<dbReference type="HOGENOM" id="CLU_776491_0_0_1"/>
<dbReference type="InParanoid" id="Q9URV8"/>
<dbReference type="OMA" id="SYYKRYD"/>
<dbReference type="PhylomeDB" id="Q9URV8"/>
<dbReference type="Reactome" id="R-SPO-193144">
    <property type="pathway name" value="Estrogen biosynthesis"/>
</dbReference>
<dbReference type="Reactome" id="R-SPO-194002">
    <property type="pathway name" value="Glucocorticoid biosynthesis"/>
</dbReference>
<dbReference type="Reactome" id="R-SPO-5365859">
    <property type="pathway name" value="RA biosynthesis pathway"/>
</dbReference>
<dbReference type="Reactome" id="R-SPO-77108">
    <property type="pathway name" value="Utilization of Ketone Bodies"/>
</dbReference>
<dbReference type="Reactome" id="R-SPO-77111">
    <property type="pathway name" value="Synthesis of Ketone Bodies"/>
</dbReference>
<dbReference type="Reactome" id="R-SPO-9757110">
    <property type="pathway name" value="Prednisone ADME"/>
</dbReference>
<dbReference type="PRO" id="PR:Q9URV8"/>
<dbReference type="Proteomes" id="UP000002485">
    <property type="component" value="Chromosome II"/>
</dbReference>
<dbReference type="GO" id="GO:0005737">
    <property type="term" value="C:cytoplasm"/>
    <property type="evidence" value="ECO:0007005"/>
    <property type="project" value="PomBase"/>
</dbReference>
<dbReference type="GO" id="GO:0005739">
    <property type="term" value="C:mitochondrion"/>
    <property type="evidence" value="ECO:0000266"/>
    <property type="project" value="PomBase"/>
</dbReference>
<dbReference type="GO" id="GO:0016491">
    <property type="term" value="F:oxidoreductase activity"/>
    <property type="evidence" value="ECO:0000318"/>
    <property type="project" value="GO_Central"/>
</dbReference>
<dbReference type="GO" id="GO:0016229">
    <property type="term" value="F:steroid dehydrogenase activity"/>
    <property type="evidence" value="ECO:0000266"/>
    <property type="project" value="PomBase"/>
</dbReference>
<dbReference type="GO" id="GO:0008202">
    <property type="term" value="P:steroid metabolic process"/>
    <property type="evidence" value="ECO:0000318"/>
    <property type="project" value="GO_Central"/>
</dbReference>
<dbReference type="InterPro" id="IPR013952">
    <property type="entry name" value="DUF1776_fun"/>
</dbReference>
<dbReference type="PANTHER" id="PTHR43313:SF1">
    <property type="entry name" value="3BETA-HYDROXYSTEROID DEHYDROGENASE DHS-16"/>
    <property type="match status" value="1"/>
</dbReference>
<dbReference type="PANTHER" id="PTHR43313">
    <property type="entry name" value="SHORT-CHAIN DEHYDROGENASE/REDUCTASE FAMILY 9C"/>
    <property type="match status" value="1"/>
</dbReference>
<dbReference type="Pfam" id="PF08643">
    <property type="entry name" value="DUF1776"/>
    <property type="match status" value="2"/>
</dbReference>
<evidence type="ECO:0000269" key="1">
    <source>
    </source>
</evidence>
<evidence type="ECO:0000269" key="2">
    <source>
    </source>
</evidence>
<evidence type="ECO:0000305" key="3"/>
<name>YBL3_SCHPO</name>
<reference key="1">
    <citation type="journal article" date="2002" name="Nature">
        <title>The genome sequence of Schizosaccharomyces pombe.</title>
        <authorList>
            <person name="Wood V."/>
            <person name="Gwilliam R."/>
            <person name="Rajandream M.A."/>
            <person name="Lyne M.H."/>
            <person name="Lyne R."/>
            <person name="Stewart A."/>
            <person name="Sgouros J.G."/>
            <person name="Peat N."/>
            <person name="Hayles J."/>
            <person name="Baker S.G."/>
            <person name="Basham D."/>
            <person name="Bowman S."/>
            <person name="Brooks K."/>
            <person name="Brown D."/>
            <person name="Brown S."/>
            <person name="Chillingworth T."/>
            <person name="Churcher C.M."/>
            <person name="Collins M."/>
            <person name="Connor R."/>
            <person name="Cronin A."/>
            <person name="Davis P."/>
            <person name="Feltwell T."/>
            <person name="Fraser A."/>
            <person name="Gentles S."/>
            <person name="Goble A."/>
            <person name="Hamlin N."/>
            <person name="Harris D.E."/>
            <person name="Hidalgo J."/>
            <person name="Hodgson G."/>
            <person name="Holroyd S."/>
            <person name="Hornsby T."/>
            <person name="Howarth S."/>
            <person name="Huckle E.J."/>
            <person name="Hunt S."/>
            <person name="Jagels K."/>
            <person name="James K.D."/>
            <person name="Jones L."/>
            <person name="Jones M."/>
            <person name="Leather S."/>
            <person name="McDonald S."/>
            <person name="McLean J."/>
            <person name="Mooney P."/>
            <person name="Moule S."/>
            <person name="Mungall K.L."/>
            <person name="Murphy L.D."/>
            <person name="Niblett D."/>
            <person name="Odell C."/>
            <person name="Oliver K."/>
            <person name="O'Neil S."/>
            <person name="Pearson D."/>
            <person name="Quail M.A."/>
            <person name="Rabbinowitsch E."/>
            <person name="Rutherford K.M."/>
            <person name="Rutter S."/>
            <person name="Saunders D."/>
            <person name="Seeger K."/>
            <person name="Sharp S."/>
            <person name="Skelton J."/>
            <person name="Simmonds M.N."/>
            <person name="Squares R."/>
            <person name="Squares S."/>
            <person name="Stevens K."/>
            <person name="Taylor K."/>
            <person name="Taylor R.G."/>
            <person name="Tivey A."/>
            <person name="Walsh S.V."/>
            <person name="Warren T."/>
            <person name="Whitehead S."/>
            <person name="Woodward J.R."/>
            <person name="Volckaert G."/>
            <person name="Aert R."/>
            <person name="Robben J."/>
            <person name="Grymonprez B."/>
            <person name="Weltjens I."/>
            <person name="Vanstreels E."/>
            <person name="Rieger M."/>
            <person name="Schaefer M."/>
            <person name="Mueller-Auer S."/>
            <person name="Gabel C."/>
            <person name="Fuchs M."/>
            <person name="Duesterhoeft A."/>
            <person name="Fritzc C."/>
            <person name="Holzer E."/>
            <person name="Moestl D."/>
            <person name="Hilbert H."/>
            <person name="Borzym K."/>
            <person name="Langer I."/>
            <person name="Beck A."/>
            <person name="Lehrach H."/>
            <person name="Reinhardt R."/>
            <person name="Pohl T.M."/>
            <person name="Eger P."/>
            <person name="Zimmermann W."/>
            <person name="Wedler H."/>
            <person name="Wambutt R."/>
            <person name="Purnelle B."/>
            <person name="Goffeau A."/>
            <person name="Cadieu E."/>
            <person name="Dreano S."/>
            <person name="Gloux S."/>
            <person name="Lelaure V."/>
            <person name="Mottier S."/>
            <person name="Galibert F."/>
            <person name="Aves S.J."/>
            <person name="Xiang Z."/>
            <person name="Hunt C."/>
            <person name="Moore K."/>
            <person name="Hurst S.M."/>
            <person name="Lucas M."/>
            <person name="Rochet M."/>
            <person name="Gaillardin C."/>
            <person name="Tallada V.A."/>
            <person name="Garzon A."/>
            <person name="Thode G."/>
            <person name="Daga R.R."/>
            <person name="Cruzado L."/>
            <person name="Jimenez J."/>
            <person name="Sanchez M."/>
            <person name="del Rey F."/>
            <person name="Benito J."/>
            <person name="Dominguez A."/>
            <person name="Revuelta J.L."/>
            <person name="Moreno S."/>
            <person name="Armstrong J."/>
            <person name="Forsburg S.L."/>
            <person name="Cerutti L."/>
            <person name="Lowe T."/>
            <person name="McCombie W.R."/>
            <person name="Paulsen I."/>
            <person name="Potashkin J."/>
            <person name="Shpakovski G.V."/>
            <person name="Ussery D."/>
            <person name="Barrell B.G."/>
            <person name="Nurse P."/>
        </authorList>
    </citation>
    <scope>NUCLEOTIDE SEQUENCE [LARGE SCALE GENOMIC DNA]</scope>
    <source>
        <strain>972 / ATCC 24843</strain>
    </source>
</reference>
<reference key="2">
    <citation type="journal article" date="2006" name="Nat. Biotechnol.">
        <title>ORFeome cloning and global analysis of protein localization in the fission yeast Schizosaccharomyces pombe.</title>
        <authorList>
            <person name="Matsuyama A."/>
            <person name="Arai R."/>
            <person name="Yashiroda Y."/>
            <person name="Shirai A."/>
            <person name="Kamata A."/>
            <person name="Sekido S."/>
            <person name="Kobayashi Y."/>
            <person name="Hashimoto A."/>
            <person name="Hamamoto M."/>
            <person name="Hiraoka Y."/>
            <person name="Horinouchi S."/>
            <person name="Yoshida M."/>
        </authorList>
    </citation>
    <scope>SUBCELLULAR LOCATION [LARGE SCALE ANALYSIS]</scope>
</reference>
<reference key="3">
    <citation type="journal article" date="2008" name="J. Proteome Res.">
        <title>Phosphoproteome analysis of fission yeast.</title>
        <authorList>
            <person name="Wilson-Grady J.T."/>
            <person name="Villen J."/>
            <person name="Gygi S.P."/>
        </authorList>
    </citation>
    <scope>PHOSPHORYLATION [LARGE SCALE ANALYSIS] AT SER-282</scope>
    <scope>IDENTIFICATION BY MASS SPECTROMETRY</scope>
</reference>
<sequence length="357" mass="40006">MNPERWAADLVSNVKDYGKRIIDYAHEKTSNPQPVTVHTTNSAKGRLGEFLYQNRVSVGLGSAALFLAGLSYYKRYDYVRKRRAPRAPNHQKTQVVVLSAWNPLASVIAHDLDRRGFIVVVLVRDASEAATVSLQQRPYIQSLIVTHNEAVERFLLSFSNQSGPKEYALRLRGLILVPTGDSLYTPIENIGKDAWISAFQQLSESFSNVSRMIPLLKSQKARIIGLSHGILSAYEPPNYAVPSILSSSIETFLRTLKRETGLQVICIKLGNLSFLNYDHSSSPGKSNYPPSLCTERKVLNKIFDSLLGCWPSPTRHVGCRTFFMVTVSRFLPTCVIDGIFSLFGKFHFFSCSLIKRS</sequence>
<comment type="subcellular location">
    <subcellularLocation>
        <location evidence="1">Cytoplasm</location>
    </subcellularLocation>
</comment>
<comment type="similarity">
    <text evidence="3">Belongs to the UPF0744 family.</text>
</comment>
<protein>
    <recommendedName>
        <fullName>UPF0744 protein C106.03</fullName>
    </recommendedName>
</protein>
<proteinExistence type="evidence at protein level"/>
<accession>Q9URV8</accession>
<gene>
    <name type="ORF">SPBC106.03</name>
</gene>
<feature type="chain" id="PRO_0000374008" description="UPF0744 protein C106.03">
    <location>
        <begin position="1"/>
        <end position="357"/>
    </location>
</feature>
<feature type="modified residue" description="Phosphoserine" evidence="2">
    <location>
        <position position="282"/>
    </location>
</feature>
<keyword id="KW-0963">Cytoplasm</keyword>
<keyword id="KW-0597">Phosphoprotein</keyword>
<keyword id="KW-1185">Reference proteome</keyword>